<dbReference type="EMBL" id="CT971583">
    <property type="protein sequence ID" value="CAK24798.1"/>
    <property type="molecule type" value="Genomic_DNA"/>
</dbReference>
<dbReference type="SMR" id="A5GPD3"/>
<dbReference type="STRING" id="32051.SynWH7803_2372"/>
<dbReference type="KEGG" id="syx:SynWH7803_2372"/>
<dbReference type="eggNOG" id="COG0244">
    <property type="taxonomic scope" value="Bacteria"/>
</dbReference>
<dbReference type="HOGENOM" id="CLU_092227_1_1_3"/>
<dbReference type="OrthoDB" id="9808307at2"/>
<dbReference type="Proteomes" id="UP000001566">
    <property type="component" value="Chromosome"/>
</dbReference>
<dbReference type="GO" id="GO:1990904">
    <property type="term" value="C:ribonucleoprotein complex"/>
    <property type="evidence" value="ECO:0007669"/>
    <property type="project" value="UniProtKB-KW"/>
</dbReference>
<dbReference type="GO" id="GO:0005840">
    <property type="term" value="C:ribosome"/>
    <property type="evidence" value="ECO:0007669"/>
    <property type="project" value="UniProtKB-KW"/>
</dbReference>
<dbReference type="GO" id="GO:0070180">
    <property type="term" value="F:large ribosomal subunit rRNA binding"/>
    <property type="evidence" value="ECO:0007669"/>
    <property type="project" value="UniProtKB-UniRule"/>
</dbReference>
<dbReference type="GO" id="GO:0006412">
    <property type="term" value="P:translation"/>
    <property type="evidence" value="ECO:0007669"/>
    <property type="project" value="UniProtKB-UniRule"/>
</dbReference>
<dbReference type="CDD" id="cd05797">
    <property type="entry name" value="Ribosomal_L10"/>
    <property type="match status" value="1"/>
</dbReference>
<dbReference type="Gene3D" id="3.30.70.1730">
    <property type="match status" value="1"/>
</dbReference>
<dbReference type="Gene3D" id="6.10.250.290">
    <property type="match status" value="1"/>
</dbReference>
<dbReference type="HAMAP" id="MF_00362">
    <property type="entry name" value="Ribosomal_uL10"/>
    <property type="match status" value="1"/>
</dbReference>
<dbReference type="InterPro" id="IPR001790">
    <property type="entry name" value="Ribosomal_uL10"/>
</dbReference>
<dbReference type="InterPro" id="IPR043141">
    <property type="entry name" value="Ribosomal_uL10-like_sf"/>
</dbReference>
<dbReference type="InterPro" id="IPR022973">
    <property type="entry name" value="Ribosomal_uL10_bac"/>
</dbReference>
<dbReference type="InterPro" id="IPR047865">
    <property type="entry name" value="Ribosomal_uL10_bac_type"/>
</dbReference>
<dbReference type="NCBIfam" id="NF000955">
    <property type="entry name" value="PRK00099.1-1"/>
    <property type="match status" value="1"/>
</dbReference>
<dbReference type="PANTHER" id="PTHR11560">
    <property type="entry name" value="39S RIBOSOMAL PROTEIN L10, MITOCHONDRIAL"/>
    <property type="match status" value="1"/>
</dbReference>
<dbReference type="Pfam" id="PF00466">
    <property type="entry name" value="Ribosomal_L10"/>
    <property type="match status" value="1"/>
</dbReference>
<dbReference type="SUPFAM" id="SSF160369">
    <property type="entry name" value="Ribosomal protein L10-like"/>
    <property type="match status" value="1"/>
</dbReference>
<name>RL10_SYNPW</name>
<evidence type="ECO:0000255" key="1">
    <source>
        <dbReference type="HAMAP-Rule" id="MF_00362"/>
    </source>
</evidence>
<evidence type="ECO:0000305" key="2"/>
<keyword id="KW-1185">Reference proteome</keyword>
<keyword id="KW-0687">Ribonucleoprotein</keyword>
<keyword id="KW-0689">Ribosomal protein</keyword>
<keyword id="KW-0694">RNA-binding</keyword>
<keyword id="KW-0699">rRNA-binding</keyword>
<reference key="1">
    <citation type="submission" date="2006-05" db="EMBL/GenBank/DDBJ databases">
        <authorList>
            <consortium name="Genoscope"/>
        </authorList>
    </citation>
    <scope>NUCLEOTIDE SEQUENCE [LARGE SCALE GENOMIC DNA]</scope>
    <source>
        <strain>WH7803</strain>
    </source>
</reference>
<gene>
    <name evidence="1" type="primary">rplJ</name>
    <name evidence="1" type="synonym">rpl10</name>
    <name type="ordered locus">SynWH7803_2372</name>
</gene>
<organism>
    <name type="scientific">Synechococcus sp. (strain WH7803)</name>
    <dbReference type="NCBI Taxonomy" id="32051"/>
    <lineage>
        <taxon>Bacteria</taxon>
        <taxon>Bacillati</taxon>
        <taxon>Cyanobacteriota</taxon>
        <taxon>Cyanophyceae</taxon>
        <taxon>Synechococcales</taxon>
        <taxon>Synechococcaceae</taxon>
        <taxon>Synechococcus</taxon>
    </lineage>
</organism>
<proteinExistence type="inferred from homology"/>
<accession>A5GPD3</accession>
<feature type="chain" id="PRO_1000005610" description="Large ribosomal subunit protein uL10">
    <location>
        <begin position="1"/>
        <end position="175"/>
    </location>
</feature>
<protein>
    <recommendedName>
        <fullName evidence="1">Large ribosomal subunit protein uL10</fullName>
    </recommendedName>
    <alternativeName>
        <fullName evidence="2">50S ribosomal protein L10</fullName>
    </alternativeName>
</protein>
<sequence length="175" mass="18525">MGRTLESKQQIVEELKQLLGEAEMALVLDYQGLSIKEMSDLRTRLQAANGVCKVTKNTLMRRAIDGDSAWSNLDSLLTGTNAFVLVKGDVGGAVKAVQAFQKDTKKSETKGGLFEGKLLSQDEIKAIGDLPSKEALMAQIAGAINAVATKVAVGINEVPSGLARALKQHAESGEG</sequence>
<comment type="function">
    <text evidence="1">Forms part of the ribosomal stalk, playing a central role in the interaction of the ribosome with GTP-bound translation factors.</text>
</comment>
<comment type="subunit">
    <text evidence="1">Part of the ribosomal stalk of the 50S ribosomal subunit. The N-terminus interacts with L11 and the large rRNA to form the base of the stalk. The C-terminus forms an elongated spine to which L12 dimers bind in a sequential fashion forming a multimeric L10(L12)X complex.</text>
</comment>
<comment type="similarity">
    <text evidence="1">Belongs to the universal ribosomal protein uL10 family.</text>
</comment>